<feature type="chain" id="PRO_0000109587" description="Protein translocase subunit SecA">
    <location>
        <begin position="1"/>
        <end position="865"/>
    </location>
</feature>
<feature type="binding site" evidence="1">
    <location>
        <position position="93"/>
    </location>
    <ligand>
        <name>ATP</name>
        <dbReference type="ChEBI" id="CHEBI:30616"/>
    </ligand>
</feature>
<feature type="binding site" evidence="1">
    <location>
        <begin position="111"/>
        <end position="115"/>
    </location>
    <ligand>
        <name>ATP</name>
        <dbReference type="ChEBI" id="CHEBI:30616"/>
    </ligand>
</feature>
<feature type="binding site" evidence="1">
    <location>
        <position position="501"/>
    </location>
    <ligand>
        <name>ATP</name>
        <dbReference type="ChEBI" id="CHEBI:30616"/>
    </ligand>
</feature>
<feature type="binding site" evidence="1">
    <location>
        <position position="841"/>
    </location>
    <ligand>
        <name>Zn(2+)</name>
        <dbReference type="ChEBI" id="CHEBI:29105"/>
    </ligand>
</feature>
<feature type="binding site" evidence="1">
    <location>
        <position position="843"/>
    </location>
    <ligand>
        <name>Zn(2+)</name>
        <dbReference type="ChEBI" id="CHEBI:29105"/>
    </ligand>
</feature>
<feature type="binding site" evidence="1">
    <location>
        <position position="852"/>
    </location>
    <ligand>
        <name>Zn(2+)</name>
        <dbReference type="ChEBI" id="CHEBI:29105"/>
    </ligand>
</feature>
<feature type="binding site" evidence="1">
    <location>
        <position position="853"/>
    </location>
    <ligand>
        <name>Zn(2+)</name>
        <dbReference type="ChEBI" id="CHEBI:29105"/>
    </ligand>
</feature>
<gene>
    <name evidence="1" type="primary">secA</name>
    <name type="ordered locus">HP_0786</name>
</gene>
<sequence length="865" mass="99084">MIKAIIGKIIGTRNDRWIKQYKKQVLTINALEPTYEKMSDDELQNAFEELKKRVRSTEKDLQEKTLLEVLPESFAITREASKRILKMCHFDVQLIGGMVLNDGKIAEMKTGEGKTLVATLAVALNALKGESVYVVTVNDYLAHRDSKEMEPLYHFLGYSVGTITASVRDDDERLEIYSKDIVYGTNNEFGFDYLRDNMKYSLEHKVQKSHAFAIVDEVDSILIDEARTPLIISGPVDRRMENYNKADEVAKSMQVEIDFTIDEKNRAILITEEGIKKAENLFGVDNLYKIENAALSHHLDQALKANYLFFIDKDYIVANNEVVIVDEFTGRLSEGRRFSEGLHQALEAKEGVSIKEESQTLADITFQNYFRMFSKLAGMTGTAQTEATEFLEIYNLEVVSIPTNLAIKRKDLNDLIYKSEKEKFDAVILKIKELHDKGQPVLVGTASIEKSETLHALLKKERIPHTVLNAKQHTKEAEIIKDAGLKGAVTIATNMAGRGVDIKLTDEIKELGGLYIIGTERHESRRIDNQLRGRSGRQGDPGTSQFYLSLEDNLLRIFGSDRIKGVMEKLGLKDGEHIESKLVTRAVENAQKKVENLHFESRKHLLEYDDVANEQRKSVYKFRDELLDVNYDISAKIAENREYALNQIFSKLKAFDHQNLSEEELLGLKNILKEDFNAHVSLEDLKKASPIENFVAEKLKSDYENKMKVLDSEQRSRIERIVYLQILDNAWREHLYTMDNLKTGINLRGYNQKDPLVEYKKESYNLFLEFIEDIKTEAIKTFSKIQFENEQDSSDAERYLDNFSEEREHESVTYRHEEALDEDLNVAMKAFAKTPKRNEPCPCQSGKKYKDCCAKSGPKKGLFAK</sequence>
<dbReference type="EC" id="7.4.2.8" evidence="1"/>
<dbReference type="EMBL" id="AE000511">
    <property type="protein sequence ID" value="AAD07830.1"/>
    <property type="molecule type" value="Genomic_DNA"/>
</dbReference>
<dbReference type="PIR" id="B64618">
    <property type="entry name" value="B64618"/>
</dbReference>
<dbReference type="RefSeq" id="NP_207579.1">
    <property type="nucleotide sequence ID" value="NC_000915.1"/>
</dbReference>
<dbReference type="RefSeq" id="WP_000588147.1">
    <property type="nucleotide sequence ID" value="NC_018939.1"/>
</dbReference>
<dbReference type="SMR" id="O25475"/>
<dbReference type="DIP" id="DIP-3356N"/>
<dbReference type="FunCoup" id="O25475">
    <property type="interactions" value="408"/>
</dbReference>
<dbReference type="IntAct" id="O25475">
    <property type="interactions" value="2"/>
</dbReference>
<dbReference type="MINT" id="O25475"/>
<dbReference type="STRING" id="85962.HP_0786"/>
<dbReference type="PaxDb" id="85962-C694_04030"/>
<dbReference type="EnsemblBacteria" id="AAD07830">
    <property type="protein sequence ID" value="AAD07830"/>
    <property type="gene ID" value="HP_0786"/>
</dbReference>
<dbReference type="KEGG" id="heo:C694_04030"/>
<dbReference type="KEGG" id="hpy:HP_0786"/>
<dbReference type="PATRIC" id="fig|85962.47.peg.838"/>
<dbReference type="eggNOG" id="COG0653">
    <property type="taxonomic scope" value="Bacteria"/>
</dbReference>
<dbReference type="InParanoid" id="O25475"/>
<dbReference type="OrthoDB" id="9805579at2"/>
<dbReference type="PhylomeDB" id="O25475"/>
<dbReference type="Proteomes" id="UP000000429">
    <property type="component" value="Chromosome"/>
</dbReference>
<dbReference type="GO" id="GO:0031522">
    <property type="term" value="C:cell envelope Sec protein transport complex"/>
    <property type="evidence" value="ECO:0000318"/>
    <property type="project" value="GO_Central"/>
</dbReference>
<dbReference type="GO" id="GO:0005737">
    <property type="term" value="C:cytoplasm"/>
    <property type="evidence" value="ECO:0007669"/>
    <property type="project" value="UniProtKB-SubCell"/>
</dbReference>
<dbReference type="GO" id="GO:0005886">
    <property type="term" value="C:plasma membrane"/>
    <property type="evidence" value="ECO:0000318"/>
    <property type="project" value="GO_Central"/>
</dbReference>
<dbReference type="GO" id="GO:0005524">
    <property type="term" value="F:ATP binding"/>
    <property type="evidence" value="ECO:0000318"/>
    <property type="project" value="GO_Central"/>
</dbReference>
<dbReference type="GO" id="GO:0046872">
    <property type="term" value="F:metal ion binding"/>
    <property type="evidence" value="ECO:0007669"/>
    <property type="project" value="UniProtKB-KW"/>
</dbReference>
<dbReference type="GO" id="GO:0008564">
    <property type="term" value="F:protein-exporting ATPase activity"/>
    <property type="evidence" value="ECO:0007669"/>
    <property type="project" value="UniProtKB-EC"/>
</dbReference>
<dbReference type="GO" id="GO:0065002">
    <property type="term" value="P:intracellular protein transmembrane transport"/>
    <property type="evidence" value="ECO:0007669"/>
    <property type="project" value="UniProtKB-UniRule"/>
</dbReference>
<dbReference type="GO" id="GO:0017038">
    <property type="term" value="P:protein import"/>
    <property type="evidence" value="ECO:0007669"/>
    <property type="project" value="InterPro"/>
</dbReference>
<dbReference type="GO" id="GO:0006605">
    <property type="term" value="P:protein targeting"/>
    <property type="evidence" value="ECO:0007669"/>
    <property type="project" value="UniProtKB-UniRule"/>
</dbReference>
<dbReference type="GO" id="GO:0043952">
    <property type="term" value="P:protein transport by the Sec complex"/>
    <property type="evidence" value="ECO:0000318"/>
    <property type="project" value="GO_Central"/>
</dbReference>
<dbReference type="CDD" id="cd17928">
    <property type="entry name" value="DEXDc_SecA"/>
    <property type="match status" value="1"/>
</dbReference>
<dbReference type="CDD" id="cd18803">
    <property type="entry name" value="SF2_C_secA"/>
    <property type="match status" value="1"/>
</dbReference>
<dbReference type="FunFam" id="3.40.50.300:FF:000429">
    <property type="entry name" value="Preprotein translocase subunit SecA"/>
    <property type="match status" value="1"/>
</dbReference>
<dbReference type="FunFam" id="3.90.1440.10:FF:000001">
    <property type="entry name" value="Preprotein translocase subunit SecA"/>
    <property type="match status" value="1"/>
</dbReference>
<dbReference type="FunFam" id="1.10.3060.10:FF:000012">
    <property type="entry name" value="Protein translocase subunit SecA"/>
    <property type="match status" value="1"/>
</dbReference>
<dbReference type="Gene3D" id="1.10.3060.10">
    <property type="entry name" value="Helical scaffold and wing domains of SecA"/>
    <property type="match status" value="1"/>
</dbReference>
<dbReference type="Gene3D" id="3.40.50.300">
    <property type="entry name" value="P-loop containing nucleotide triphosphate hydrolases"/>
    <property type="match status" value="3"/>
</dbReference>
<dbReference type="Gene3D" id="3.90.1440.10">
    <property type="entry name" value="SecA, preprotein cross-linking domain"/>
    <property type="match status" value="1"/>
</dbReference>
<dbReference type="HAMAP" id="MF_01382">
    <property type="entry name" value="SecA"/>
    <property type="match status" value="1"/>
</dbReference>
<dbReference type="InterPro" id="IPR014001">
    <property type="entry name" value="Helicase_ATP-bd"/>
</dbReference>
<dbReference type="InterPro" id="IPR001650">
    <property type="entry name" value="Helicase_C-like"/>
</dbReference>
<dbReference type="InterPro" id="IPR027417">
    <property type="entry name" value="P-loop_NTPase"/>
</dbReference>
<dbReference type="InterPro" id="IPR004027">
    <property type="entry name" value="SEC_C_motif"/>
</dbReference>
<dbReference type="InterPro" id="IPR000185">
    <property type="entry name" value="SecA"/>
</dbReference>
<dbReference type="InterPro" id="IPR020937">
    <property type="entry name" value="SecA_CS"/>
</dbReference>
<dbReference type="InterPro" id="IPR011115">
    <property type="entry name" value="SecA_DEAD"/>
</dbReference>
<dbReference type="InterPro" id="IPR014018">
    <property type="entry name" value="SecA_motor_DEAD"/>
</dbReference>
<dbReference type="InterPro" id="IPR011130">
    <property type="entry name" value="SecA_preprotein_X-link_dom"/>
</dbReference>
<dbReference type="InterPro" id="IPR044722">
    <property type="entry name" value="SecA_SF2_C"/>
</dbReference>
<dbReference type="InterPro" id="IPR011116">
    <property type="entry name" value="SecA_Wing/Scaffold"/>
</dbReference>
<dbReference type="InterPro" id="IPR036266">
    <property type="entry name" value="SecA_Wing/Scaffold_sf"/>
</dbReference>
<dbReference type="InterPro" id="IPR036670">
    <property type="entry name" value="SecA_X-link_sf"/>
</dbReference>
<dbReference type="NCBIfam" id="NF006630">
    <property type="entry name" value="PRK09200.1"/>
    <property type="match status" value="1"/>
</dbReference>
<dbReference type="NCBIfam" id="TIGR00963">
    <property type="entry name" value="secA"/>
    <property type="match status" value="1"/>
</dbReference>
<dbReference type="PANTHER" id="PTHR30612:SF0">
    <property type="entry name" value="CHLOROPLAST PROTEIN-TRANSPORTING ATPASE"/>
    <property type="match status" value="1"/>
</dbReference>
<dbReference type="PANTHER" id="PTHR30612">
    <property type="entry name" value="SECA INNER MEMBRANE COMPONENT OF SEC PROTEIN SECRETION SYSTEM"/>
    <property type="match status" value="1"/>
</dbReference>
<dbReference type="Pfam" id="PF21090">
    <property type="entry name" value="P-loop_SecA"/>
    <property type="match status" value="1"/>
</dbReference>
<dbReference type="Pfam" id="PF02810">
    <property type="entry name" value="SEC-C"/>
    <property type="match status" value="1"/>
</dbReference>
<dbReference type="Pfam" id="PF07517">
    <property type="entry name" value="SecA_DEAD"/>
    <property type="match status" value="1"/>
</dbReference>
<dbReference type="Pfam" id="PF01043">
    <property type="entry name" value="SecA_PP_bind"/>
    <property type="match status" value="1"/>
</dbReference>
<dbReference type="Pfam" id="PF07516">
    <property type="entry name" value="SecA_SW"/>
    <property type="match status" value="1"/>
</dbReference>
<dbReference type="PRINTS" id="PR00906">
    <property type="entry name" value="SECA"/>
</dbReference>
<dbReference type="SMART" id="SM00957">
    <property type="entry name" value="SecA_DEAD"/>
    <property type="match status" value="1"/>
</dbReference>
<dbReference type="SMART" id="SM00958">
    <property type="entry name" value="SecA_PP_bind"/>
    <property type="match status" value="1"/>
</dbReference>
<dbReference type="SUPFAM" id="SSF81886">
    <property type="entry name" value="Helical scaffold and wing domains of SecA"/>
    <property type="match status" value="1"/>
</dbReference>
<dbReference type="SUPFAM" id="SSF52540">
    <property type="entry name" value="P-loop containing nucleoside triphosphate hydrolases"/>
    <property type="match status" value="2"/>
</dbReference>
<dbReference type="SUPFAM" id="SSF81767">
    <property type="entry name" value="Pre-protein crosslinking domain of SecA"/>
    <property type="match status" value="1"/>
</dbReference>
<dbReference type="PROSITE" id="PS01312">
    <property type="entry name" value="SECA"/>
    <property type="match status" value="1"/>
</dbReference>
<dbReference type="PROSITE" id="PS51196">
    <property type="entry name" value="SECA_MOTOR_DEAD"/>
    <property type="match status" value="1"/>
</dbReference>
<keyword id="KW-0067">ATP-binding</keyword>
<keyword id="KW-0997">Cell inner membrane</keyword>
<keyword id="KW-1003">Cell membrane</keyword>
<keyword id="KW-0963">Cytoplasm</keyword>
<keyword id="KW-0472">Membrane</keyword>
<keyword id="KW-0479">Metal-binding</keyword>
<keyword id="KW-0547">Nucleotide-binding</keyword>
<keyword id="KW-0653">Protein transport</keyword>
<keyword id="KW-1185">Reference proteome</keyword>
<keyword id="KW-1278">Translocase</keyword>
<keyword id="KW-0811">Translocation</keyword>
<keyword id="KW-0813">Transport</keyword>
<keyword id="KW-0862">Zinc</keyword>
<protein>
    <recommendedName>
        <fullName evidence="1">Protein translocase subunit SecA</fullName>
        <ecNumber evidence="1">7.4.2.8</ecNumber>
    </recommendedName>
</protein>
<proteinExistence type="inferred from homology"/>
<reference key="1">
    <citation type="journal article" date="1997" name="Nature">
        <title>The complete genome sequence of the gastric pathogen Helicobacter pylori.</title>
        <authorList>
            <person name="Tomb J.-F."/>
            <person name="White O."/>
            <person name="Kerlavage A.R."/>
            <person name="Clayton R.A."/>
            <person name="Sutton G.G."/>
            <person name="Fleischmann R.D."/>
            <person name="Ketchum K.A."/>
            <person name="Klenk H.-P."/>
            <person name="Gill S.R."/>
            <person name="Dougherty B.A."/>
            <person name="Nelson K.E."/>
            <person name="Quackenbush J."/>
            <person name="Zhou L."/>
            <person name="Kirkness E.F."/>
            <person name="Peterson S.N."/>
            <person name="Loftus B.J."/>
            <person name="Richardson D.L."/>
            <person name="Dodson R.J."/>
            <person name="Khalak H.G."/>
            <person name="Glodek A."/>
            <person name="McKenney K."/>
            <person name="FitzGerald L.M."/>
            <person name="Lee N."/>
            <person name="Adams M.D."/>
            <person name="Hickey E.K."/>
            <person name="Berg D.E."/>
            <person name="Gocayne J.D."/>
            <person name="Utterback T.R."/>
            <person name="Peterson J.D."/>
            <person name="Kelley J.M."/>
            <person name="Cotton M.D."/>
            <person name="Weidman J.F."/>
            <person name="Fujii C."/>
            <person name="Bowman C."/>
            <person name="Watthey L."/>
            <person name="Wallin E."/>
            <person name="Hayes W.S."/>
            <person name="Borodovsky M."/>
            <person name="Karp P.D."/>
            <person name="Smith H.O."/>
            <person name="Fraser C.M."/>
            <person name="Venter J.C."/>
        </authorList>
    </citation>
    <scope>NUCLEOTIDE SEQUENCE [LARGE SCALE GENOMIC DNA]</scope>
    <source>
        <strain>ATCC 700392 / 26695</strain>
    </source>
</reference>
<name>SECA_HELPY</name>
<organism>
    <name type="scientific">Helicobacter pylori (strain ATCC 700392 / 26695)</name>
    <name type="common">Campylobacter pylori</name>
    <dbReference type="NCBI Taxonomy" id="85962"/>
    <lineage>
        <taxon>Bacteria</taxon>
        <taxon>Pseudomonadati</taxon>
        <taxon>Campylobacterota</taxon>
        <taxon>Epsilonproteobacteria</taxon>
        <taxon>Campylobacterales</taxon>
        <taxon>Helicobacteraceae</taxon>
        <taxon>Helicobacter</taxon>
    </lineage>
</organism>
<evidence type="ECO:0000255" key="1">
    <source>
        <dbReference type="HAMAP-Rule" id="MF_01382"/>
    </source>
</evidence>
<accession>O25475</accession>
<comment type="function">
    <text evidence="1">Part of the Sec protein translocase complex. Interacts with the SecYEG preprotein conducting channel. Has a central role in coupling the hydrolysis of ATP to the transfer of proteins into and across the cell membrane, serving as an ATP-driven molecular motor driving the stepwise translocation of polypeptide chains across the membrane.</text>
</comment>
<comment type="catalytic activity">
    <reaction evidence="1">
        <text>ATP + H2O + cellular proteinSide 1 = ADP + phosphate + cellular proteinSide 2.</text>
        <dbReference type="EC" id="7.4.2.8"/>
    </reaction>
</comment>
<comment type="cofactor">
    <cofactor evidence="1">
        <name>Zn(2+)</name>
        <dbReference type="ChEBI" id="CHEBI:29105"/>
    </cofactor>
    <text evidence="1">May bind 1 zinc ion per subunit.</text>
</comment>
<comment type="subunit">
    <text evidence="1">Monomer and homodimer. Part of the essential Sec protein translocation apparatus which comprises SecA, SecYEG and auxiliary proteins SecDF-YajC and YidC.</text>
</comment>
<comment type="subcellular location">
    <subcellularLocation>
        <location evidence="1">Cell inner membrane</location>
        <topology evidence="1">Peripheral membrane protein</topology>
        <orientation evidence="1">Cytoplasmic side</orientation>
    </subcellularLocation>
    <subcellularLocation>
        <location evidence="1">Cytoplasm</location>
    </subcellularLocation>
    <text evidence="1">Distribution is 50-50.</text>
</comment>
<comment type="similarity">
    <text evidence="1">Belongs to the SecA family.</text>
</comment>